<keyword id="KW-0963">Cytoplasm</keyword>
<keyword id="KW-0903">Direct protein sequencing</keyword>
<keyword id="KW-0238">DNA-binding</keyword>
<keyword id="KW-0240">DNA-directed RNA polymerase</keyword>
<keyword id="KW-0548">Nucleotidyltransferase</keyword>
<keyword id="KW-0804">Transcription</keyword>
<keyword id="KW-0808">Transferase</keyword>
<dbReference type="EC" id="2.7.7.6" evidence="2"/>
<dbReference type="EMBL" id="X57144">
    <property type="protein sequence ID" value="CAA40424.1"/>
    <property type="molecule type" value="Genomic_DNA"/>
</dbReference>
<dbReference type="EMBL" id="AM774415">
    <property type="protein sequence ID" value="CAP15005.1"/>
    <property type="molecule type" value="Genomic_DNA"/>
</dbReference>
<dbReference type="PIR" id="S03572">
    <property type="entry name" value="S03572"/>
</dbReference>
<dbReference type="RefSeq" id="WP_010903998.1">
    <property type="nucleotide sequence ID" value="NC_010364.1"/>
</dbReference>
<dbReference type="SMR" id="B0R8D6"/>
<dbReference type="EnsemblBacteria" id="CAP15005">
    <property type="protein sequence ID" value="CAP15005"/>
    <property type="gene ID" value="OE_4742R"/>
</dbReference>
<dbReference type="KEGG" id="hsl:OE_4742R"/>
<dbReference type="HOGENOM" id="CLU_000524_5_3_2"/>
<dbReference type="PhylomeDB" id="B0R8D6"/>
<dbReference type="Proteomes" id="UP000001321">
    <property type="component" value="Chromosome"/>
</dbReference>
<dbReference type="GO" id="GO:0005737">
    <property type="term" value="C:cytoplasm"/>
    <property type="evidence" value="ECO:0007669"/>
    <property type="project" value="UniProtKB-SubCell"/>
</dbReference>
<dbReference type="GO" id="GO:0000428">
    <property type="term" value="C:DNA-directed RNA polymerase complex"/>
    <property type="evidence" value="ECO:0007669"/>
    <property type="project" value="UniProtKB-KW"/>
</dbReference>
<dbReference type="GO" id="GO:0003677">
    <property type="term" value="F:DNA binding"/>
    <property type="evidence" value="ECO:0007669"/>
    <property type="project" value="UniProtKB-KW"/>
</dbReference>
<dbReference type="GO" id="GO:0003899">
    <property type="term" value="F:DNA-directed RNA polymerase activity"/>
    <property type="evidence" value="ECO:0007669"/>
    <property type="project" value="UniProtKB-EC"/>
</dbReference>
<dbReference type="GO" id="GO:0032549">
    <property type="term" value="F:ribonucleoside binding"/>
    <property type="evidence" value="ECO:0007669"/>
    <property type="project" value="InterPro"/>
</dbReference>
<dbReference type="GO" id="GO:0006351">
    <property type="term" value="P:DNA-templated transcription"/>
    <property type="evidence" value="ECO:0007669"/>
    <property type="project" value="InterPro"/>
</dbReference>
<dbReference type="Gene3D" id="3.90.1100.10">
    <property type="match status" value="2"/>
</dbReference>
<dbReference type="Gene3D" id="3.90.1110.10">
    <property type="entry name" value="RNA polymerase Rpb2, domain 2"/>
    <property type="match status" value="1"/>
</dbReference>
<dbReference type="InterPro" id="IPR015712">
    <property type="entry name" value="DNA-dir_RNA_pol_su2"/>
</dbReference>
<dbReference type="InterPro" id="IPR007644">
    <property type="entry name" value="RNA_pol_bsu_protrusion"/>
</dbReference>
<dbReference type="InterPro" id="IPR007642">
    <property type="entry name" value="RNA_pol_Rpb2_2"/>
</dbReference>
<dbReference type="InterPro" id="IPR037034">
    <property type="entry name" value="RNA_pol_Rpb2_2_sf"/>
</dbReference>
<dbReference type="InterPro" id="IPR007645">
    <property type="entry name" value="RNA_pol_Rpb2_3"/>
</dbReference>
<dbReference type="NCBIfam" id="NF007175">
    <property type="entry name" value="PRK09606.1"/>
    <property type="match status" value="1"/>
</dbReference>
<dbReference type="PANTHER" id="PTHR20856">
    <property type="entry name" value="DNA-DIRECTED RNA POLYMERASE I SUBUNIT 2"/>
    <property type="match status" value="1"/>
</dbReference>
<dbReference type="Pfam" id="PF04563">
    <property type="entry name" value="RNA_pol_Rpb2_1"/>
    <property type="match status" value="1"/>
</dbReference>
<dbReference type="Pfam" id="PF04561">
    <property type="entry name" value="RNA_pol_Rpb2_2"/>
    <property type="match status" value="1"/>
</dbReference>
<dbReference type="Pfam" id="PF04565">
    <property type="entry name" value="RNA_pol_Rpb2_3"/>
    <property type="match status" value="1"/>
</dbReference>
<dbReference type="SUPFAM" id="SSF64484">
    <property type="entry name" value="beta and beta-prime subunits of DNA dependent RNA-polymerase"/>
    <property type="match status" value="1"/>
</dbReference>
<organism>
    <name type="scientific">Halobacterium salinarum (strain ATCC 29341 / DSM 671 / R1)</name>
    <dbReference type="NCBI Taxonomy" id="478009"/>
    <lineage>
        <taxon>Archaea</taxon>
        <taxon>Methanobacteriati</taxon>
        <taxon>Methanobacteriota</taxon>
        <taxon>Stenosarchaea group</taxon>
        <taxon>Halobacteria</taxon>
        <taxon>Halobacteriales</taxon>
        <taxon>Halobacteriaceae</taxon>
        <taxon>Halobacterium</taxon>
        <taxon>Halobacterium salinarum NRC-34001</taxon>
    </lineage>
</organism>
<accession>B0R8D6</accession>
<accession>P15352</accession>
<accession>Q9HM77</accession>
<evidence type="ECO:0000250" key="1">
    <source>
        <dbReference type="UniProtKB" id="B8YB55"/>
    </source>
</evidence>
<evidence type="ECO:0000250" key="2">
    <source>
        <dbReference type="UniProtKB" id="P11513"/>
    </source>
</evidence>
<evidence type="ECO:0000256" key="3">
    <source>
        <dbReference type="SAM" id="MobiDB-lite"/>
    </source>
</evidence>
<evidence type="ECO:0000269" key="4">
    <source>
    </source>
</evidence>
<evidence type="ECO:0000303" key="5">
    <source>
    </source>
</evidence>
<evidence type="ECO:0000303" key="6">
    <source>
    </source>
</evidence>
<evidence type="ECO:0000305" key="7"/>
<gene>
    <name evidence="7" type="primary">rpo2N</name>
    <name evidence="5" type="synonym">rpoB2</name>
    <name type="ordered locus">OE_4742R</name>
</gene>
<protein>
    <recommendedName>
        <fullName evidence="7">DNA-directed RNA polymerase subunit Rpo2N</fullName>
        <ecNumber evidence="2">2.7.7.6</ecNumber>
    </recommendedName>
    <alternativeName>
        <fullName evidence="6">DNA-directed RNA polymerase subunit B''</fullName>
    </alternativeName>
</protein>
<name>RPO2N_HALS3</name>
<sequence length="523" mass="59396">MLQEDKRELSESYFSKERLAEHHFRSYNAFLEHGMQDVVTEKERIETDIGDKEDEEPVWVELGDVRAVTPRVREADGSEELLYPQEARLRNITYSAPVFMEMSIVRGGEEEEERVLDTTETKVGRMPIMVGSDKCNISGFSDEELIEIGEDPADPGGYFIINGSERVLMTSEDLAPNKILAEYDSKYGDEIQVAKTFSQRRGYRALVLVERNREGLLEVSFPSVSGSISFVTLVRALGLESDEEIVHRVSEDPEIVKFMLENLEEADVQTQEEAIEDLGQRVASGQGKNYQLKRANYVIDRYLLPHLHEDGVEEEETRINKAYYLCRMAEACFELALGRREADDKDHYANKRLKVSGDLMKDLFRTALNKLARDVKYQLERANMRNRELTVNTVVRSDVLTERLEHPIATGNWVGGRSGVSQLVDRTDFMGVLSHLRRLRSPLSRSQPHFEARDLHATQWGRICPSETPEGPNCGLVKNFAQAMELSQDVDDERDLKQELSSMGVEGIPGISMETTSTTSADD</sequence>
<proteinExistence type="evidence at protein level"/>
<feature type="chain" id="PRO_0000409673" description="DNA-directed RNA polymerase subunit Rpo2N">
    <location>
        <begin position="1"/>
        <end position="523"/>
    </location>
</feature>
<feature type="region of interest" description="Disordered" evidence="3">
    <location>
        <begin position="501"/>
        <end position="523"/>
    </location>
</feature>
<feature type="compositionally biased region" description="Polar residues" evidence="3">
    <location>
        <begin position="513"/>
        <end position="523"/>
    </location>
</feature>
<reference key="1">
    <citation type="journal article" date="1989" name="J. Mol. Biol.">
        <title>Sequence, organization, transcription and evolution of RNA polymerase subunit genes from the archaebacterial extreme halophiles Halobacterium halobium and Halococcus morrhuae.</title>
        <authorList>
            <person name="Leffers H."/>
            <person name="Gropp F."/>
            <person name="Lottspeich F."/>
            <person name="Zillig W."/>
            <person name="Garrett R.A."/>
        </authorList>
    </citation>
    <scope>NUCLEOTIDE SEQUENCE [GENOMIC DNA]</scope>
    <scope>PROTEIN SEQUENCE OF 1-17</scope>
    <scope>SUBUNIT</scope>
    <source>
        <strain>ATCC 29341 / DSM 671 / R1</strain>
    </source>
</reference>
<reference key="2">
    <citation type="journal article" date="2008" name="Genomics">
        <title>Evolution in the laboratory: the genome of Halobacterium salinarum strain R1 compared to that of strain NRC-1.</title>
        <authorList>
            <person name="Pfeiffer F."/>
            <person name="Schuster S.C."/>
            <person name="Broicher A."/>
            <person name="Falb M."/>
            <person name="Palm P."/>
            <person name="Rodewald K."/>
            <person name="Ruepp A."/>
            <person name="Soppa J."/>
            <person name="Tittor J."/>
            <person name="Oesterhelt D."/>
        </authorList>
    </citation>
    <scope>NUCLEOTIDE SEQUENCE [LARGE SCALE GENOMIC DNA]</scope>
    <source>
        <strain>ATCC 29341 / DSM 671 / R1</strain>
    </source>
</reference>
<comment type="function">
    <text evidence="1">DNA-dependent RNA polymerase (RNAP) catalyzes the transcription of DNA into RNA using the four ribonucleoside triphosphates as substrates. The Rpo2 subunit (Rpo2N and Rpo2C in this organism) is implicated in DNA promoter recognition and in nucleotide binding.</text>
</comment>
<comment type="catalytic activity">
    <reaction evidence="2">
        <text>RNA(n) + a ribonucleoside 5'-triphosphate = RNA(n+1) + diphosphate</text>
        <dbReference type="Rhea" id="RHEA:21248"/>
        <dbReference type="Rhea" id="RHEA-COMP:14527"/>
        <dbReference type="Rhea" id="RHEA-COMP:17342"/>
        <dbReference type="ChEBI" id="CHEBI:33019"/>
        <dbReference type="ChEBI" id="CHEBI:61557"/>
        <dbReference type="ChEBI" id="CHEBI:140395"/>
        <dbReference type="EC" id="2.7.7.6"/>
    </reaction>
</comment>
<comment type="subunit">
    <text evidence="4">Part of the RNA polymerase complex.</text>
</comment>
<comment type="subcellular location">
    <subcellularLocation>
        <location evidence="1">Cytoplasm</location>
    </subcellularLocation>
</comment>
<comment type="similarity">
    <text evidence="7">Belongs to the RNA polymerase beta chain family.</text>
</comment>